<organism>
    <name type="scientific">Streptococcus pneumoniae (strain ATCC 700669 / Spain 23F-1)</name>
    <dbReference type="NCBI Taxonomy" id="561276"/>
    <lineage>
        <taxon>Bacteria</taxon>
        <taxon>Bacillati</taxon>
        <taxon>Bacillota</taxon>
        <taxon>Bacilli</taxon>
        <taxon>Lactobacillales</taxon>
        <taxon>Streptococcaceae</taxon>
        <taxon>Streptococcus</taxon>
    </lineage>
</organism>
<sequence>MITIVLLILAYLLGSIPSGLWIGQVFFQINLREHGSGNTGTTNTFRILGKKAGMATFVIDFFKGTLATLLPIIFHLQGVSPLIFGLLAVIGHTFPIFAGFKGGKAVATSAGVIFGFAPIFCLYLAIIFFGALYLGSMISLSSVTASIAAVIGVLLFPLFGFILSNYDSLFIAIILALASLIIIRHKDNIARIKNKTENLVPWGLNLTHQDPKK</sequence>
<protein>
    <recommendedName>
        <fullName evidence="1">Glycerol-3-phosphate acyltransferase</fullName>
    </recommendedName>
    <alternativeName>
        <fullName evidence="1">Acyl-PO4 G3P acyltransferase</fullName>
    </alternativeName>
    <alternativeName>
        <fullName evidence="1">Acyl-phosphate--glycerol-3-phosphate acyltransferase</fullName>
    </alternativeName>
    <alternativeName>
        <fullName evidence="1">G3P acyltransferase</fullName>
        <shortName evidence="1">GPAT</shortName>
        <ecNumber evidence="1">2.3.1.275</ecNumber>
    </alternativeName>
    <alternativeName>
        <fullName evidence="1">Lysophosphatidic acid synthase</fullName>
        <shortName evidence="1">LPA synthase</shortName>
    </alternativeName>
</protein>
<evidence type="ECO:0000255" key="1">
    <source>
        <dbReference type="HAMAP-Rule" id="MF_01043"/>
    </source>
</evidence>
<reference key="1">
    <citation type="journal article" date="2009" name="J. Bacteriol.">
        <title>Role of conjugative elements in the evolution of the multidrug-resistant pandemic clone Streptococcus pneumoniae Spain23F ST81.</title>
        <authorList>
            <person name="Croucher N.J."/>
            <person name="Walker D."/>
            <person name="Romero P."/>
            <person name="Lennard N."/>
            <person name="Paterson G.K."/>
            <person name="Bason N.C."/>
            <person name="Mitchell A.M."/>
            <person name="Quail M.A."/>
            <person name="Andrew P.W."/>
            <person name="Parkhill J."/>
            <person name="Bentley S.D."/>
            <person name="Mitchell T.J."/>
        </authorList>
    </citation>
    <scope>NUCLEOTIDE SEQUENCE [LARGE SCALE GENOMIC DNA]</scope>
    <source>
        <strain>ATCC 700669 / Spain 23F-1</strain>
    </source>
</reference>
<name>PLSY_STRPJ</name>
<gene>
    <name evidence="1" type="primary">plsY</name>
    <name type="ordered locus">SPN23F07730</name>
</gene>
<accession>B8ZNQ1</accession>
<feature type="chain" id="PRO_1000149585" description="Glycerol-3-phosphate acyltransferase">
    <location>
        <begin position="1"/>
        <end position="213"/>
    </location>
</feature>
<feature type="transmembrane region" description="Helical" evidence="1">
    <location>
        <begin position="2"/>
        <end position="22"/>
    </location>
</feature>
<feature type="transmembrane region" description="Helical" evidence="1">
    <location>
        <begin position="52"/>
        <end position="74"/>
    </location>
</feature>
<feature type="transmembrane region" description="Helical" evidence="1">
    <location>
        <begin position="81"/>
        <end position="100"/>
    </location>
</feature>
<feature type="transmembrane region" description="Helical" evidence="1">
    <location>
        <begin position="112"/>
        <end position="132"/>
    </location>
</feature>
<feature type="transmembrane region" description="Helical" evidence="1">
    <location>
        <begin position="143"/>
        <end position="163"/>
    </location>
</feature>
<feature type="transmembrane region" description="Helical" evidence="1">
    <location>
        <begin position="164"/>
        <end position="184"/>
    </location>
</feature>
<dbReference type="EC" id="2.3.1.275" evidence="1"/>
<dbReference type="EMBL" id="FM211187">
    <property type="protein sequence ID" value="CAR68612.1"/>
    <property type="molecule type" value="Genomic_DNA"/>
</dbReference>
<dbReference type="RefSeq" id="WP_000628789.1">
    <property type="nucleotide sequence ID" value="NC_011900.1"/>
</dbReference>
<dbReference type="SMR" id="B8ZNQ1"/>
<dbReference type="GeneID" id="45653793"/>
<dbReference type="KEGG" id="sne:SPN23F07730"/>
<dbReference type="HOGENOM" id="CLU_081254_4_0_9"/>
<dbReference type="UniPathway" id="UPA00085"/>
<dbReference type="GO" id="GO:0005886">
    <property type="term" value="C:plasma membrane"/>
    <property type="evidence" value="ECO:0007669"/>
    <property type="project" value="UniProtKB-SubCell"/>
</dbReference>
<dbReference type="GO" id="GO:0043772">
    <property type="term" value="F:acyl-phosphate glycerol-3-phosphate acyltransferase activity"/>
    <property type="evidence" value="ECO:0007669"/>
    <property type="project" value="UniProtKB-UniRule"/>
</dbReference>
<dbReference type="GO" id="GO:0008654">
    <property type="term" value="P:phospholipid biosynthetic process"/>
    <property type="evidence" value="ECO:0007669"/>
    <property type="project" value="UniProtKB-UniRule"/>
</dbReference>
<dbReference type="HAMAP" id="MF_01043">
    <property type="entry name" value="PlsY"/>
    <property type="match status" value="1"/>
</dbReference>
<dbReference type="InterPro" id="IPR003811">
    <property type="entry name" value="G3P_acylTferase_PlsY"/>
</dbReference>
<dbReference type="NCBIfam" id="TIGR00023">
    <property type="entry name" value="glycerol-3-phosphate 1-O-acyltransferase PlsY"/>
    <property type="match status" value="1"/>
</dbReference>
<dbReference type="PANTHER" id="PTHR30309:SF0">
    <property type="entry name" value="GLYCEROL-3-PHOSPHATE ACYLTRANSFERASE-RELATED"/>
    <property type="match status" value="1"/>
</dbReference>
<dbReference type="PANTHER" id="PTHR30309">
    <property type="entry name" value="INNER MEMBRANE PROTEIN YGIH"/>
    <property type="match status" value="1"/>
</dbReference>
<dbReference type="Pfam" id="PF02660">
    <property type="entry name" value="G3P_acyltransf"/>
    <property type="match status" value="1"/>
</dbReference>
<dbReference type="SMART" id="SM01207">
    <property type="entry name" value="G3P_acyltransf"/>
    <property type="match status" value="1"/>
</dbReference>
<keyword id="KW-1003">Cell membrane</keyword>
<keyword id="KW-0444">Lipid biosynthesis</keyword>
<keyword id="KW-0443">Lipid metabolism</keyword>
<keyword id="KW-0472">Membrane</keyword>
<keyword id="KW-0594">Phospholipid biosynthesis</keyword>
<keyword id="KW-1208">Phospholipid metabolism</keyword>
<keyword id="KW-0808">Transferase</keyword>
<keyword id="KW-0812">Transmembrane</keyword>
<keyword id="KW-1133">Transmembrane helix</keyword>
<comment type="function">
    <text evidence="1">Catalyzes the transfer of an acyl group from acyl-phosphate (acyl-PO(4)) to glycerol-3-phosphate (G3P) to form lysophosphatidic acid (LPA). This enzyme utilizes acyl-phosphate as fatty acyl donor, but not acyl-CoA or acyl-ACP.</text>
</comment>
<comment type="catalytic activity">
    <reaction evidence="1">
        <text>an acyl phosphate + sn-glycerol 3-phosphate = a 1-acyl-sn-glycero-3-phosphate + phosphate</text>
        <dbReference type="Rhea" id="RHEA:34075"/>
        <dbReference type="ChEBI" id="CHEBI:43474"/>
        <dbReference type="ChEBI" id="CHEBI:57597"/>
        <dbReference type="ChEBI" id="CHEBI:57970"/>
        <dbReference type="ChEBI" id="CHEBI:59918"/>
        <dbReference type="EC" id="2.3.1.275"/>
    </reaction>
</comment>
<comment type="pathway">
    <text evidence="1">Lipid metabolism; phospholipid metabolism.</text>
</comment>
<comment type="subunit">
    <text evidence="1">Probably interacts with PlsX.</text>
</comment>
<comment type="subcellular location">
    <subcellularLocation>
        <location evidence="1">Cell membrane</location>
        <topology evidence="1">Multi-pass membrane protein</topology>
    </subcellularLocation>
</comment>
<comment type="similarity">
    <text evidence="1">Belongs to the PlsY family.</text>
</comment>
<proteinExistence type="inferred from homology"/>